<organism>
    <name type="scientific">Aromatoleum aromaticum (strain DSM 19018 / LMG 30748 / EbN1)</name>
    <name type="common">Azoarcus sp. (strain EbN1)</name>
    <dbReference type="NCBI Taxonomy" id="76114"/>
    <lineage>
        <taxon>Bacteria</taxon>
        <taxon>Pseudomonadati</taxon>
        <taxon>Pseudomonadota</taxon>
        <taxon>Betaproteobacteria</taxon>
        <taxon>Rhodocyclales</taxon>
        <taxon>Rhodocyclaceae</taxon>
        <taxon>Aromatoleum</taxon>
    </lineage>
</organism>
<feature type="chain" id="PRO_1000011557" description="GTPase Der">
    <location>
        <begin position="1"/>
        <end position="442"/>
    </location>
</feature>
<feature type="domain" description="EngA-type G 1">
    <location>
        <begin position="3"/>
        <end position="167"/>
    </location>
</feature>
<feature type="domain" description="EngA-type G 2">
    <location>
        <begin position="177"/>
        <end position="350"/>
    </location>
</feature>
<feature type="domain" description="KH-like" evidence="1">
    <location>
        <begin position="351"/>
        <end position="435"/>
    </location>
</feature>
<feature type="binding site" evidence="1">
    <location>
        <begin position="9"/>
        <end position="16"/>
    </location>
    <ligand>
        <name>GTP</name>
        <dbReference type="ChEBI" id="CHEBI:37565"/>
        <label>1</label>
    </ligand>
</feature>
<feature type="binding site" evidence="1">
    <location>
        <begin position="56"/>
        <end position="60"/>
    </location>
    <ligand>
        <name>GTP</name>
        <dbReference type="ChEBI" id="CHEBI:37565"/>
        <label>1</label>
    </ligand>
</feature>
<feature type="binding site" evidence="1">
    <location>
        <begin position="119"/>
        <end position="122"/>
    </location>
    <ligand>
        <name>GTP</name>
        <dbReference type="ChEBI" id="CHEBI:37565"/>
        <label>1</label>
    </ligand>
</feature>
<feature type="binding site" evidence="1">
    <location>
        <begin position="183"/>
        <end position="190"/>
    </location>
    <ligand>
        <name>GTP</name>
        <dbReference type="ChEBI" id="CHEBI:37565"/>
        <label>2</label>
    </ligand>
</feature>
<feature type="binding site" evidence="1">
    <location>
        <begin position="230"/>
        <end position="234"/>
    </location>
    <ligand>
        <name>GTP</name>
        <dbReference type="ChEBI" id="CHEBI:37565"/>
        <label>2</label>
    </ligand>
</feature>
<feature type="binding site" evidence="1">
    <location>
        <begin position="295"/>
        <end position="298"/>
    </location>
    <ligand>
        <name>GTP</name>
        <dbReference type="ChEBI" id="CHEBI:37565"/>
        <label>2</label>
    </ligand>
</feature>
<reference key="1">
    <citation type="journal article" date="2005" name="Arch. Microbiol.">
        <title>The genome sequence of an anaerobic aromatic-degrading denitrifying bacterium, strain EbN1.</title>
        <authorList>
            <person name="Rabus R."/>
            <person name="Kube M."/>
            <person name="Heider J."/>
            <person name="Beck A."/>
            <person name="Heitmann K."/>
            <person name="Widdel F."/>
            <person name="Reinhardt R."/>
        </authorList>
    </citation>
    <scope>NUCLEOTIDE SEQUENCE [LARGE SCALE GENOMIC DNA]</scope>
    <source>
        <strain>DSM 19018 / LMG 30748 / EbN1</strain>
    </source>
</reference>
<protein>
    <recommendedName>
        <fullName evidence="1">GTPase Der</fullName>
    </recommendedName>
    <alternativeName>
        <fullName evidence="1">GTP-binding protein EngA</fullName>
    </alternativeName>
</protein>
<sequence length="442" mass="48611">MKPTIVLVGRPNVGKSTLFNRLTKTRDALVADQPGLTRDRHYGIGRVGDRDYLVVDTAGFDPVAKDGIMHEMARQAEQAIAEADALLFMVDGRSGLTPHDEQIAARLRRAGRPVYLVVNKSEGMERTMVAAEFHALGLGDPLPVSASHGEGVKQLLDLVLGAFPPDVEPEEDEGRTPRIAIVGRPNVGKSTFVNSLLGEERVIAFDMPGTTRDAIAIPFERDGRHYTLIDTAGLRRRGKVFEAVEKFSVIKTLQAIEQANVVVLVLDASQDISDQDAHIAGFILEAGRALVVAVNKWDDVDDYRRELIKQDLTRKLNFLSFARFHYISALKGAGVAAVMKSVDAAYAAAMVNLSTPRLTRTMQAALAKQAPPRHGVFRPKMRYAHQGGNNPPVVVIHGAALDHVPTSYVRYLERTFMEAFKLQGTPLRIQFRTAHNPFIGKE</sequence>
<proteinExistence type="inferred from homology"/>
<keyword id="KW-0342">GTP-binding</keyword>
<keyword id="KW-0547">Nucleotide-binding</keyword>
<keyword id="KW-1185">Reference proteome</keyword>
<keyword id="KW-0677">Repeat</keyword>
<keyword id="KW-0690">Ribosome biogenesis</keyword>
<evidence type="ECO:0000255" key="1">
    <source>
        <dbReference type="HAMAP-Rule" id="MF_00195"/>
    </source>
</evidence>
<accession>Q5P7B7</accession>
<gene>
    <name evidence="1" type="primary">der</name>
    <name type="synonym">engA</name>
    <name type="ordered locus">AZOSEA06710</name>
    <name type="ORF">ebA1256</name>
</gene>
<name>DER_AROAE</name>
<comment type="function">
    <text evidence="1">GTPase that plays an essential role in the late steps of ribosome biogenesis.</text>
</comment>
<comment type="subunit">
    <text evidence="1">Associates with the 50S ribosomal subunit.</text>
</comment>
<comment type="similarity">
    <text evidence="1">Belongs to the TRAFAC class TrmE-Era-EngA-EngB-Septin-like GTPase superfamily. EngA (Der) GTPase family.</text>
</comment>
<dbReference type="EMBL" id="CR555306">
    <property type="protein sequence ID" value="CAI06794.1"/>
    <property type="molecule type" value="Genomic_DNA"/>
</dbReference>
<dbReference type="RefSeq" id="WP_011236522.1">
    <property type="nucleotide sequence ID" value="NC_006513.1"/>
</dbReference>
<dbReference type="SMR" id="Q5P7B7"/>
<dbReference type="STRING" id="76114.ebA1256"/>
<dbReference type="KEGG" id="eba:ebA1256"/>
<dbReference type="eggNOG" id="COG1160">
    <property type="taxonomic scope" value="Bacteria"/>
</dbReference>
<dbReference type="HOGENOM" id="CLU_016077_6_2_4"/>
<dbReference type="OrthoDB" id="9805918at2"/>
<dbReference type="Proteomes" id="UP000006552">
    <property type="component" value="Chromosome"/>
</dbReference>
<dbReference type="GO" id="GO:0005525">
    <property type="term" value="F:GTP binding"/>
    <property type="evidence" value="ECO:0007669"/>
    <property type="project" value="UniProtKB-UniRule"/>
</dbReference>
<dbReference type="GO" id="GO:0043022">
    <property type="term" value="F:ribosome binding"/>
    <property type="evidence" value="ECO:0007669"/>
    <property type="project" value="TreeGrafter"/>
</dbReference>
<dbReference type="GO" id="GO:0042254">
    <property type="term" value="P:ribosome biogenesis"/>
    <property type="evidence" value="ECO:0007669"/>
    <property type="project" value="UniProtKB-KW"/>
</dbReference>
<dbReference type="CDD" id="cd01894">
    <property type="entry name" value="EngA1"/>
    <property type="match status" value="1"/>
</dbReference>
<dbReference type="CDD" id="cd01895">
    <property type="entry name" value="EngA2"/>
    <property type="match status" value="1"/>
</dbReference>
<dbReference type="FunFam" id="3.40.50.300:FF:000040">
    <property type="entry name" value="GTPase Der"/>
    <property type="match status" value="1"/>
</dbReference>
<dbReference type="FunFam" id="3.40.50.300:FF:000057">
    <property type="entry name" value="GTPase Der"/>
    <property type="match status" value="1"/>
</dbReference>
<dbReference type="Gene3D" id="3.30.300.20">
    <property type="match status" value="1"/>
</dbReference>
<dbReference type="Gene3D" id="3.40.50.300">
    <property type="entry name" value="P-loop containing nucleotide triphosphate hydrolases"/>
    <property type="match status" value="2"/>
</dbReference>
<dbReference type="HAMAP" id="MF_00195">
    <property type="entry name" value="GTPase_Der"/>
    <property type="match status" value="1"/>
</dbReference>
<dbReference type="InterPro" id="IPR031166">
    <property type="entry name" value="G_ENGA"/>
</dbReference>
<dbReference type="InterPro" id="IPR006073">
    <property type="entry name" value="GTP-bd"/>
</dbReference>
<dbReference type="InterPro" id="IPR016484">
    <property type="entry name" value="GTPase_Der"/>
</dbReference>
<dbReference type="InterPro" id="IPR032859">
    <property type="entry name" value="KH_dom-like"/>
</dbReference>
<dbReference type="InterPro" id="IPR015946">
    <property type="entry name" value="KH_dom-like_a/b"/>
</dbReference>
<dbReference type="InterPro" id="IPR027417">
    <property type="entry name" value="P-loop_NTPase"/>
</dbReference>
<dbReference type="InterPro" id="IPR005225">
    <property type="entry name" value="Small_GTP-bd"/>
</dbReference>
<dbReference type="NCBIfam" id="TIGR03594">
    <property type="entry name" value="GTPase_EngA"/>
    <property type="match status" value="1"/>
</dbReference>
<dbReference type="NCBIfam" id="TIGR00231">
    <property type="entry name" value="small_GTP"/>
    <property type="match status" value="2"/>
</dbReference>
<dbReference type="PANTHER" id="PTHR43834">
    <property type="entry name" value="GTPASE DER"/>
    <property type="match status" value="1"/>
</dbReference>
<dbReference type="PANTHER" id="PTHR43834:SF6">
    <property type="entry name" value="GTPASE DER"/>
    <property type="match status" value="1"/>
</dbReference>
<dbReference type="Pfam" id="PF14714">
    <property type="entry name" value="KH_dom-like"/>
    <property type="match status" value="1"/>
</dbReference>
<dbReference type="Pfam" id="PF01926">
    <property type="entry name" value="MMR_HSR1"/>
    <property type="match status" value="2"/>
</dbReference>
<dbReference type="PIRSF" id="PIRSF006485">
    <property type="entry name" value="GTP-binding_EngA"/>
    <property type="match status" value="1"/>
</dbReference>
<dbReference type="PRINTS" id="PR00326">
    <property type="entry name" value="GTP1OBG"/>
</dbReference>
<dbReference type="SUPFAM" id="SSF52540">
    <property type="entry name" value="P-loop containing nucleoside triphosphate hydrolases"/>
    <property type="match status" value="2"/>
</dbReference>
<dbReference type="PROSITE" id="PS51712">
    <property type="entry name" value="G_ENGA"/>
    <property type="match status" value="2"/>
</dbReference>